<comment type="function">
    <text>Core component of nucleosome. Nucleosomes wrap and compact DNA into chromatin, limiting DNA accessibility to the cellular machineries which require DNA as a template. Histones thereby play a central role in transcription regulation, DNA repair, DNA replication and chromosomal stability. DNA accessibility is regulated via a complex set of post-translational modifications of histones, also called histone code, and nucleosome remodeling.</text>
</comment>
<comment type="subunit">
    <text>The nucleosome is a histone octamer containing two molecules each of H2A, H2B, H3 and H4 assembled in one H3-H4 heterotetramer and two H2A-H2B heterodimers. The octamer wraps approximately 147 bp of DNA.</text>
</comment>
<comment type="subcellular location">
    <subcellularLocation>
        <location>Nucleus</location>
    </subcellularLocation>
    <subcellularLocation>
        <location>Chromosome</location>
    </subcellularLocation>
</comment>
<comment type="similarity">
    <text evidence="3">Belongs to the histone H2A family.</text>
</comment>
<proteinExistence type="inferred from homology"/>
<keyword id="KW-0007">Acetylation</keyword>
<keyword id="KW-0158">Chromosome</keyword>
<keyword id="KW-0238">DNA-binding</keyword>
<keyword id="KW-0488">Methylation</keyword>
<keyword id="KW-0544">Nucleosome core</keyword>
<keyword id="KW-0539">Nucleus</keyword>
<protein>
    <recommendedName>
        <fullName>Histone H2A</fullName>
    </recommendedName>
</protein>
<reference key="1">
    <citation type="journal article" date="2004" name="J. Mol. Evol.">
        <title>Molecular evolutionary characterization of the mussel Mytilus histone multigene family: first record of a tandemly repeated unit of five histone genes containing an H1 subtype with 'orphon' features.</title>
        <authorList>
            <person name="Eirin-Lopez J.M."/>
            <person name="Ruiz F."/>
            <person name="Gonzalez-Tizon A.M."/>
            <person name="Martinez A."/>
            <person name="Sanchez L."/>
            <person name="Mendez J."/>
        </authorList>
    </citation>
    <scope>NUCLEOTIDE SEQUENCE [GENOMIC DNA]</scope>
</reference>
<feature type="initiator methionine" description="Removed" evidence="1">
    <location>
        <position position="1"/>
    </location>
</feature>
<feature type="chain" id="PRO_0000055252" description="Histone H2A">
    <location>
        <begin position="2"/>
        <end position="125"/>
    </location>
</feature>
<feature type="region of interest" description="Disordered" evidence="2">
    <location>
        <begin position="1"/>
        <end position="21"/>
    </location>
</feature>
<feature type="compositionally biased region" description="Basic residues" evidence="2">
    <location>
        <begin position="1"/>
        <end position="18"/>
    </location>
</feature>
<feature type="modified residue" description="N-acetylserine" evidence="1">
    <location>
        <position position="2"/>
    </location>
</feature>
<feature type="modified residue" description="N5-methylglutamine" evidence="1">
    <location>
        <position position="104"/>
    </location>
</feature>
<accession>Q6WV69</accession>
<name>H2A_MYTCH</name>
<dbReference type="EMBL" id="AY267756">
    <property type="protein sequence ID" value="AAP94675.1"/>
    <property type="molecule type" value="Genomic_DNA"/>
</dbReference>
<dbReference type="SMR" id="Q6WV69"/>
<dbReference type="GO" id="GO:0000786">
    <property type="term" value="C:nucleosome"/>
    <property type="evidence" value="ECO:0007669"/>
    <property type="project" value="UniProtKB-KW"/>
</dbReference>
<dbReference type="GO" id="GO:0005634">
    <property type="term" value="C:nucleus"/>
    <property type="evidence" value="ECO:0007669"/>
    <property type="project" value="UniProtKB-SubCell"/>
</dbReference>
<dbReference type="GO" id="GO:0003677">
    <property type="term" value="F:DNA binding"/>
    <property type="evidence" value="ECO:0007669"/>
    <property type="project" value="UniProtKB-KW"/>
</dbReference>
<dbReference type="GO" id="GO:0046982">
    <property type="term" value="F:protein heterodimerization activity"/>
    <property type="evidence" value="ECO:0007669"/>
    <property type="project" value="InterPro"/>
</dbReference>
<dbReference type="GO" id="GO:0030527">
    <property type="term" value="F:structural constituent of chromatin"/>
    <property type="evidence" value="ECO:0007669"/>
    <property type="project" value="InterPro"/>
</dbReference>
<dbReference type="CDD" id="cd00074">
    <property type="entry name" value="HFD_H2A"/>
    <property type="match status" value="1"/>
</dbReference>
<dbReference type="FunFam" id="1.10.20.10:FF:000020">
    <property type="entry name" value="Histone H2A"/>
    <property type="match status" value="1"/>
</dbReference>
<dbReference type="Gene3D" id="1.10.20.10">
    <property type="entry name" value="Histone, subunit A"/>
    <property type="match status" value="1"/>
</dbReference>
<dbReference type="InterPro" id="IPR009072">
    <property type="entry name" value="Histone-fold"/>
</dbReference>
<dbReference type="InterPro" id="IPR002119">
    <property type="entry name" value="Histone_H2A"/>
</dbReference>
<dbReference type="InterPro" id="IPR007125">
    <property type="entry name" value="Histone_H2A/H2B/H3"/>
</dbReference>
<dbReference type="InterPro" id="IPR032454">
    <property type="entry name" value="Histone_H2A_C"/>
</dbReference>
<dbReference type="InterPro" id="IPR032458">
    <property type="entry name" value="Histone_H2A_CS"/>
</dbReference>
<dbReference type="PANTHER" id="PTHR23430">
    <property type="entry name" value="HISTONE H2A"/>
    <property type="match status" value="1"/>
</dbReference>
<dbReference type="Pfam" id="PF00125">
    <property type="entry name" value="Histone"/>
    <property type="match status" value="1"/>
</dbReference>
<dbReference type="Pfam" id="PF16211">
    <property type="entry name" value="Histone_H2A_C"/>
    <property type="match status" value="1"/>
</dbReference>
<dbReference type="PRINTS" id="PR00620">
    <property type="entry name" value="HISTONEH2A"/>
</dbReference>
<dbReference type="SMART" id="SM00414">
    <property type="entry name" value="H2A"/>
    <property type="match status" value="1"/>
</dbReference>
<dbReference type="SUPFAM" id="SSF47113">
    <property type="entry name" value="Histone-fold"/>
    <property type="match status" value="1"/>
</dbReference>
<dbReference type="PROSITE" id="PS00046">
    <property type="entry name" value="HISTONE_H2A"/>
    <property type="match status" value="1"/>
</dbReference>
<evidence type="ECO:0000250" key="1"/>
<evidence type="ECO:0000256" key="2">
    <source>
        <dbReference type="SAM" id="MobiDB-lite"/>
    </source>
</evidence>
<evidence type="ECO:0000305" key="3"/>
<organism>
    <name type="scientific">Mytilus chilensis</name>
    <name type="common">Chilean blue mussel</name>
    <dbReference type="NCBI Taxonomy" id="173667"/>
    <lineage>
        <taxon>Eukaryota</taxon>
        <taxon>Metazoa</taxon>
        <taxon>Spiralia</taxon>
        <taxon>Lophotrochozoa</taxon>
        <taxon>Mollusca</taxon>
        <taxon>Bivalvia</taxon>
        <taxon>Autobranchia</taxon>
        <taxon>Pteriomorphia</taxon>
        <taxon>Mytilida</taxon>
        <taxon>Mytiloidea</taxon>
        <taxon>Mytilidae</taxon>
        <taxon>Mytilinae</taxon>
        <taxon>Mytilus</taxon>
    </lineage>
</organism>
<sequence>MSGRGKGGKAKAKAKSRSSRAGLQFPVGRIHRLLRKGNYAERVGAGAPVYLAAVLEYLAAEVLELAGNAARDNKKSRIIPRHLQLAIRNDEELNKLLSGVTIAQGGVLPNIQAVLLPKKTQKAAK</sequence>